<comment type="subcellular location">
    <subcellularLocation>
        <location evidence="1">Cytoplasm</location>
    </subcellularLocation>
</comment>
<comment type="similarity">
    <text evidence="1">Belongs to the TACO1 family.</text>
</comment>
<organism>
    <name type="scientific">Microcystis aeruginosa (strain NIES-843 / IAM M-2473)</name>
    <dbReference type="NCBI Taxonomy" id="449447"/>
    <lineage>
        <taxon>Bacteria</taxon>
        <taxon>Bacillati</taxon>
        <taxon>Cyanobacteriota</taxon>
        <taxon>Cyanophyceae</taxon>
        <taxon>Oscillatoriophycideae</taxon>
        <taxon>Chroococcales</taxon>
        <taxon>Microcystaceae</taxon>
        <taxon>Microcystis</taxon>
    </lineage>
</organism>
<dbReference type="EMBL" id="AP009552">
    <property type="protein sequence ID" value="BAG01180.1"/>
    <property type="molecule type" value="Genomic_DNA"/>
</dbReference>
<dbReference type="RefSeq" id="WP_012264777.1">
    <property type="nucleotide sequence ID" value="NC_010296.1"/>
</dbReference>
<dbReference type="SMR" id="B0JTZ2"/>
<dbReference type="STRING" id="449447.MAE_13580"/>
<dbReference type="PaxDb" id="449447-MAE_13580"/>
<dbReference type="EnsemblBacteria" id="BAG01180">
    <property type="protein sequence ID" value="BAG01180"/>
    <property type="gene ID" value="MAE_13580"/>
</dbReference>
<dbReference type="KEGG" id="mar:MAE_13580"/>
<dbReference type="PATRIC" id="fig|449447.4.peg.1251"/>
<dbReference type="eggNOG" id="COG0217">
    <property type="taxonomic scope" value="Bacteria"/>
</dbReference>
<dbReference type="HOGENOM" id="CLU_062974_2_2_3"/>
<dbReference type="BioCyc" id="MAER449447:MAE_RS05995-MONOMER"/>
<dbReference type="Proteomes" id="UP000001510">
    <property type="component" value="Chromosome"/>
</dbReference>
<dbReference type="GO" id="GO:0005829">
    <property type="term" value="C:cytosol"/>
    <property type="evidence" value="ECO:0007669"/>
    <property type="project" value="TreeGrafter"/>
</dbReference>
<dbReference type="GO" id="GO:0003677">
    <property type="term" value="F:DNA binding"/>
    <property type="evidence" value="ECO:0007669"/>
    <property type="project" value="UniProtKB-UniRule"/>
</dbReference>
<dbReference type="GO" id="GO:0006355">
    <property type="term" value="P:regulation of DNA-templated transcription"/>
    <property type="evidence" value="ECO:0007669"/>
    <property type="project" value="UniProtKB-UniRule"/>
</dbReference>
<dbReference type="FunFam" id="1.10.10.200:FF:000002">
    <property type="entry name" value="Probable transcriptional regulatory protein CLM62_37755"/>
    <property type="match status" value="1"/>
</dbReference>
<dbReference type="Gene3D" id="1.10.10.200">
    <property type="match status" value="1"/>
</dbReference>
<dbReference type="Gene3D" id="3.30.70.980">
    <property type="match status" value="2"/>
</dbReference>
<dbReference type="HAMAP" id="MF_00693">
    <property type="entry name" value="Transcrip_reg_TACO1"/>
    <property type="match status" value="1"/>
</dbReference>
<dbReference type="InterPro" id="IPR017856">
    <property type="entry name" value="Integrase-like_N"/>
</dbReference>
<dbReference type="InterPro" id="IPR048300">
    <property type="entry name" value="TACO1_YebC-like_2nd/3rd_dom"/>
</dbReference>
<dbReference type="InterPro" id="IPR049083">
    <property type="entry name" value="TACO1_YebC_N"/>
</dbReference>
<dbReference type="InterPro" id="IPR002876">
    <property type="entry name" value="Transcrip_reg_TACO1-like"/>
</dbReference>
<dbReference type="InterPro" id="IPR026564">
    <property type="entry name" value="Transcrip_reg_TACO1-like_dom3"/>
</dbReference>
<dbReference type="InterPro" id="IPR029072">
    <property type="entry name" value="YebC-like"/>
</dbReference>
<dbReference type="NCBIfam" id="NF001030">
    <property type="entry name" value="PRK00110.1"/>
    <property type="match status" value="1"/>
</dbReference>
<dbReference type="NCBIfam" id="NF009044">
    <property type="entry name" value="PRK12378.1"/>
    <property type="match status" value="1"/>
</dbReference>
<dbReference type="NCBIfam" id="TIGR01033">
    <property type="entry name" value="YebC/PmpR family DNA-binding transcriptional regulator"/>
    <property type="match status" value="1"/>
</dbReference>
<dbReference type="PANTHER" id="PTHR12532:SF6">
    <property type="entry name" value="TRANSCRIPTIONAL REGULATORY PROTEIN YEBC-RELATED"/>
    <property type="match status" value="1"/>
</dbReference>
<dbReference type="PANTHER" id="PTHR12532">
    <property type="entry name" value="TRANSLATIONAL ACTIVATOR OF CYTOCHROME C OXIDASE 1"/>
    <property type="match status" value="1"/>
</dbReference>
<dbReference type="Pfam" id="PF20772">
    <property type="entry name" value="TACO1_YebC_N"/>
    <property type="match status" value="1"/>
</dbReference>
<dbReference type="Pfam" id="PF01709">
    <property type="entry name" value="Transcrip_reg"/>
    <property type="match status" value="1"/>
</dbReference>
<dbReference type="SUPFAM" id="SSF75625">
    <property type="entry name" value="YebC-like"/>
    <property type="match status" value="1"/>
</dbReference>
<proteinExistence type="inferred from homology"/>
<feature type="chain" id="PRO_1000132215" description="Probable transcriptional regulatory protein MAE_13580">
    <location>
        <begin position="1"/>
        <end position="254"/>
    </location>
</feature>
<evidence type="ECO:0000255" key="1">
    <source>
        <dbReference type="HAMAP-Rule" id="MF_00693"/>
    </source>
</evidence>
<accession>B0JTZ2</accession>
<reference key="1">
    <citation type="journal article" date="2007" name="DNA Res.">
        <title>Complete genomic structure of the bloom-forming toxic cyanobacterium Microcystis aeruginosa NIES-843.</title>
        <authorList>
            <person name="Kaneko T."/>
            <person name="Nakajima N."/>
            <person name="Okamoto S."/>
            <person name="Suzuki I."/>
            <person name="Tanabe Y."/>
            <person name="Tamaoki M."/>
            <person name="Nakamura Y."/>
            <person name="Kasai F."/>
            <person name="Watanabe A."/>
            <person name="Kawashima K."/>
            <person name="Kishida Y."/>
            <person name="Ono A."/>
            <person name="Shimizu Y."/>
            <person name="Takahashi C."/>
            <person name="Minami C."/>
            <person name="Fujishiro T."/>
            <person name="Kohara M."/>
            <person name="Katoh M."/>
            <person name="Nakazaki N."/>
            <person name="Nakayama S."/>
            <person name="Yamada M."/>
            <person name="Tabata S."/>
            <person name="Watanabe M.M."/>
        </authorList>
    </citation>
    <scope>NUCLEOTIDE SEQUENCE [LARGE SCALE GENOMIC DNA]</scope>
    <source>
        <strain>NIES-843 / IAM M-247</strain>
    </source>
</reference>
<sequence length="254" mass="27939">MAGHSKWANIKRQKARVDAKKGQTFTQLSRAIIVATRNGVPDPAGNFQLRTAIEKAKAAGIPNDNIERAIAKGAGTWENDSAFEEIRYEGYGPGGVAILIEALTDNRNRTAAALRAAFSKNGGNLGETGCVGWMFDHKGVIRLEGTIDEDKLLEASLEGQAQSYEFFDSEEEGQGAEVFTEVSNLERLNKVLQAAGFKVKEAELRWIPTNTLEVSDREQARFLLKLIDTLESLDHVQSVTANFDLVEELMLLDL</sequence>
<keyword id="KW-0963">Cytoplasm</keyword>
<keyword id="KW-0238">DNA-binding</keyword>
<keyword id="KW-0804">Transcription</keyword>
<keyword id="KW-0805">Transcription regulation</keyword>
<gene>
    <name type="ordered locus">MAE_13580</name>
</gene>
<name>Y1358_MICAN</name>
<protein>
    <recommendedName>
        <fullName evidence="1">Probable transcriptional regulatory protein MAE_13580</fullName>
    </recommendedName>
</protein>